<proteinExistence type="inferred from homology"/>
<comment type="similarity">
    <text evidence="1">Belongs to the UPF0134 family.</text>
</comment>
<evidence type="ECO:0000305" key="1"/>
<reference key="1">
    <citation type="journal article" date="1996" name="Nucleic Acids Res.">
        <title>Complete sequence analysis of the genome of the bacterium Mycoplasma pneumoniae.</title>
        <authorList>
            <person name="Himmelreich R."/>
            <person name="Hilbert H."/>
            <person name="Plagens H."/>
            <person name="Pirkl E."/>
            <person name="Li B.-C."/>
            <person name="Herrmann R."/>
        </authorList>
    </citation>
    <scope>NUCLEOTIDE SEQUENCE [LARGE SCALE GENOMIC DNA]</scope>
    <source>
        <strain>ATCC 29342 / M129 / Subtype 1</strain>
    </source>
</reference>
<sequence>MKEKIPFYNEKEFHDMVKKTKKGTFSGWYIIDKDNKSVEFSGSFNRQFKLNKPVIPVNTEYVTRKEFNEYKVSNDQRLTKIETTLAAQGEQINKLTQTVEKQGEQINQLVQVVLLHGEQINKLTQTVEKQGEQIKELQVEQKAQGEQIKAQGKQIKAQGKTLKSILQALGGINKRLDKIDPPK</sequence>
<accession>P75592</accession>
<protein>
    <recommendedName>
        <fullName>UPF0134 protein MPN_100</fullName>
    </recommendedName>
</protein>
<name>Y100_MYCPN</name>
<organism>
    <name type="scientific">Mycoplasma pneumoniae (strain ATCC 29342 / M129 / Subtype 1)</name>
    <name type="common">Mycoplasmoides pneumoniae</name>
    <dbReference type="NCBI Taxonomy" id="272634"/>
    <lineage>
        <taxon>Bacteria</taxon>
        <taxon>Bacillati</taxon>
        <taxon>Mycoplasmatota</taxon>
        <taxon>Mycoplasmoidales</taxon>
        <taxon>Mycoplasmoidaceae</taxon>
        <taxon>Mycoplasmoides</taxon>
    </lineage>
</organism>
<feature type="chain" id="PRO_0000221594" description="UPF0134 protein MPN_100">
    <location>
        <begin position="1"/>
        <end position="183"/>
    </location>
</feature>
<keyword id="KW-1185">Reference proteome</keyword>
<gene>
    <name type="ordered locus">MPN_100</name>
    <name type="ORF">MP054</name>
    <name type="ORF">R02_orf183o</name>
</gene>
<dbReference type="EMBL" id="U00089">
    <property type="protein sequence ID" value="AAB95702.1"/>
    <property type="molecule type" value="Genomic_DNA"/>
</dbReference>
<dbReference type="PIR" id="S73380">
    <property type="entry name" value="S73380"/>
</dbReference>
<dbReference type="RefSeq" id="NP_109788.1">
    <property type="nucleotide sequence ID" value="NC_000912.1"/>
</dbReference>
<dbReference type="RefSeq" id="WP_010874457.1">
    <property type="nucleotide sequence ID" value="NZ_OU342337.1"/>
</dbReference>
<dbReference type="SMR" id="P75592"/>
<dbReference type="IntAct" id="P75592">
    <property type="interactions" value="2"/>
</dbReference>
<dbReference type="EnsemblBacteria" id="AAB95702">
    <property type="protein sequence ID" value="AAB95702"/>
    <property type="gene ID" value="MPN_100"/>
</dbReference>
<dbReference type="KEGG" id="mpn:MPN_100"/>
<dbReference type="PATRIC" id="fig|272634.6.peg.104"/>
<dbReference type="HOGENOM" id="CLU_137918_0_0_14"/>
<dbReference type="BioCyc" id="MPNE272634:G1GJ3-168-MONOMER"/>
<dbReference type="Proteomes" id="UP000000808">
    <property type="component" value="Chromosome"/>
</dbReference>
<dbReference type="Gene3D" id="6.10.250.40">
    <property type="match status" value="3"/>
</dbReference>
<dbReference type="InterPro" id="IPR002862">
    <property type="entry name" value="DUF16"/>
</dbReference>
<dbReference type="Pfam" id="PF01519">
    <property type="entry name" value="DUF16"/>
    <property type="match status" value="2"/>
</dbReference>
<dbReference type="SUPFAM" id="SSF144266">
    <property type="entry name" value="MPN010-like"/>
    <property type="match status" value="3"/>
</dbReference>